<proteinExistence type="evidence at protein level"/>
<dbReference type="EMBL" id="AC012187">
    <property type="status" value="NOT_ANNOTATED_CDS"/>
    <property type="molecule type" value="Genomic_DNA"/>
</dbReference>
<dbReference type="EMBL" id="CP002684">
    <property type="protein sequence ID" value="AEE28943.1"/>
    <property type="molecule type" value="Genomic_DNA"/>
</dbReference>
<dbReference type="EMBL" id="AB493454">
    <property type="protein sequence ID" value="BAH30292.1"/>
    <property type="molecule type" value="mRNA"/>
</dbReference>
<dbReference type="RefSeq" id="NP_172749.1">
    <property type="nucleotide sequence ID" value="NM_101160.2"/>
</dbReference>
<dbReference type="SMR" id="Q3E703"/>
<dbReference type="BioGRID" id="23087">
    <property type="interactions" value="9"/>
</dbReference>
<dbReference type="FunCoup" id="Q3E703">
    <property type="interactions" value="3"/>
</dbReference>
<dbReference type="IntAct" id="Q3E703">
    <property type="interactions" value="10"/>
</dbReference>
<dbReference type="STRING" id="3702.Q3E703"/>
<dbReference type="PaxDb" id="3702-AT1G12890.1"/>
<dbReference type="ProteomicsDB" id="220632"/>
<dbReference type="EnsemblPlants" id="AT1G12890.1">
    <property type="protein sequence ID" value="AT1G12890.1"/>
    <property type="gene ID" value="AT1G12890"/>
</dbReference>
<dbReference type="GeneID" id="837847"/>
<dbReference type="Gramene" id="AT1G12890.1">
    <property type="protein sequence ID" value="AT1G12890.1"/>
    <property type="gene ID" value="AT1G12890"/>
</dbReference>
<dbReference type="KEGG" id="ath:AT1G12890"/>
<dbReference type="Araport" id="AT1G12890"/>
<dbReference type="TAIR" id="AT1G12890"/>
<dbReference type="eggNOG" id="ENOG502RYDI">
    <property type="taxonomic scope" value="Eukaryota"/>
</dbReference>
<dbReference type="HOGENOM" id="CLU_1221203_0_0_1"/>
<dbReference type="InParanoid" id="Q3E703"/>
<dbReference type="OMA" id="FFYTENI"/>
<dbReference type="OrthoDB" id="780830at2759"/>
<dbReference type="PRO" id="PR:Q3E703"/>
<dbReference type="Proteomes" id="UP000006548">
    <property type="component" value="Chromosome 1"/>
</dbReference>
<dbReference type="ExpressionAtlas" id="Q3E703">
    <property type="expression patterns" value="baseline and differential"/>
</dbReference>
<dbReference type="GO" id="GO:0005634">
    <property type="term" value="C:nucleus"/>
    <property type="evidence" value="ECO:0007669"/>
    <property type="project" value="UniProtKB-SubCell"/>
</dbReference>
<dbReference type="GO" id="GO:0003677">
    <property type="term" value="F:DNA binding"/>
    <property type="evidence" value="ECO:0007669"/>
    <property type="project" value="UniProtKB-KW"/>
</dbReference>
<dbReference type="GO" id="GO:0003700">
    <property type="term" value="F:DNA-binding transcription factor activity"/>
    <property type="evidence" value="ECO:0000250"/>
    <property type="project" value="TAIR"/>
</dbReference>
<dbReference type="GO" id="GO:0009873">
    <property type="term" value="P:ethylene-activated signaling pathway"/>
    <property type="evidence" value="ECO:0007669"/>
    <property type="project" value="UniProtKB-KW"/>
</dbReference>
<dbReference type="CDD" id="cd00018">
    <property type="entry name" value="AP2"/>
    <property type="match status" value="1"/>
</dbReference>
<dbReference type="FunFam" id="3.30.730.10:FF:000001">
    <property type="entry name" value="Ethylene-responsive transcription factor 2"/>
    <property type="match status" value="1"/>
</dbReference>
<dbReference type="Gene3D" id="3.30.730.10">
    <property type="entry name" value="AP2/ERF domain"/>
    <property type="match status" value="1"/>
</dbReference>
<dbReference type="InterPro" id="IPR001471">
    <property type="entry name" value="AP2/ERF_dom"/>
</dbReference>
<dbReference type="InterPro" id="IPR036955">
    <property type="entry name" value="AP2/ERF_dom_sf"/>
</dbReference>
<dbReference type="InterPro" id="IPR016177">
    <property type="entry name" value="DNA-bd_dom_sf"/>
</dbReference>
<dbReference type="PANTHER" id="PTHR31677">
    <property type="entry name" value="AP2 DOMAIN CLASS TRANSCRIPTION FACTOR"/>
    <property type="match status" value="1"/>
</dbReference>
<dbReference type="PANTHER" id="PTHR31677:SF87">
    <property type="entry name" value="ETHYLENE-RESPONSIVE TRANSCRIPTION FACTOR ERF088"/>
    <property type="match status" value="1"/>
</dbReference>
<dbReference type="Pfam" id="PF00847">
    <property type="entry name" value="AP2"/>
    <property type="match status" value="1"/>
</dbReference>
<dbReference type="PRINTS" id="PR00367">
    <property type="entry name" value="ETHRSPELEMNT"/>
</dbReference>
<dbReference type="SMART" id="SM00380">
    <property type="entry name" value="AP2"/>
    <property type="match status" value="1"/>
</dbReference>
<dbReference type="SUPFAM" id="SSF54171">
    <property type="entry name" value="DNA-binding domain"/>
    <property type="match status" value="1"/>
</dbReference>
<dbReference type="PROSITE" id="PS51032">
    <property type="entry name" value="AP2_ERF"/>
    <property type="match status" value="1"/>
</dbReference>
<sequence length="219" mass="25011">MLKSSNKRKSKEEKKLQEGKYLGVRRRPWGRYAAEIRNPFTKERHWLGTFDTAEEAAFAYDVAARSISGSLATTNFFYTENTSLERHPQQSLEPHMTWGSSSLCLLQDQPFENNHFVADPISSSFSQKQESSTNLTNTFSHCYNDGDHVGQSKEISLPNDMSNSLFGHQDKVGEHDNADHMKFGSVLSDEPLCFEYDYIGNYLQSFLKDVNDDAPQFLM</sequence>
<keyword id="KW-0010">Activator</keyword>
<keyword id="KW-0238">DNA-binding</keyword>
<keyword id="KW-0936">Ethylene signaling pathway</keyword>
<keyword id="KW-0539">Nucleus</keyword>
<keyword id="KW-1185">Reference proteome</keyword>
<keyword id="KW-0804">Transcription</keyword>
<keyword id="KW-0805">Transcription regulation</keyword>
<gene>
    <name type="primary">ERF088</name>
    <name type="ordered locus">At1g12890</name>
    <name type="ORF">F13K23.25</name>
</gene>
<organism>
    <name type="scientific">Arabidopsis thaliana</name>
    <name type="common">Mouse-ear cress</name>
    <dbReference type="NCBI Taxonomy" id="3702"/>
    <lineage>
        <taxon>Eukaryota</taxon>
        <taxon>Viridiplantae</taxon>
        <taxon>Streptophyta</taxon>
        <taxon>Embryophyta</taxon>
        <taxon>Tracheophyta</taxon>
        <taxon>Spermatophyta</taxon>
        <taxon>Magnoliopsida</taxon>
        <taxon>eudicotyledons</taxon>
        <taxon>Gunneridae</taxon>
        <taxon>Pentapetalae</taxon>
        <taxon>rosids</taxon>
        <taxon>malvids</taxon>
        <taxon>Brassicales</taxon>
        <taxon>Brassicaceae</taxon>
        <taxon>Camelineae</taxon>
        <taxon>Arabidopsis</taxon>
    </lineage>
</organism>
<comment type="function">
    <text evidence="1">Probably acts as a transcriptional activator. Binds to the GCC-box pathogenesis-related promoter element. May be involved in the regulation of gene expression by stress factors and by components of stress signal transduction pathways (By similarity).</text>
</comment>
<comment type="interaction">
    <interactant intactId="EBI-15200258">
        <id>Q3E703</id>
    </interactant>
    <interactant intactId="EBI-25511270">
        <id>Q9FX36</id>
        <label>MYB54</label>
    </interactant>
    <organismsDiffer>false</organismsDiffer>
    <experiments>3</experiments>
</comment>
<comment type="subcellular location">
    <subcellularLocation>
        <location evidence="3">Nucleus</location>
    </subcellularLocation>
</comment>
<comment type="similarity">
    <text evidence="3">Belongs to the AP2/ERF transcription factor family. ERF subfamily.</text>
</comment>
<name>ERF88_ARATH</name>
<feature type="chain" id="PRO_0000290411" description="Ethylene-responsive transcription factor ERF088">
    <location>
        <begin position="1"/>
        <end position="219"/>
    </location>
</feature>
<feature type="DNA-binding region" description="AP2/ERF" evidence="2">
    <location>
        <begin position="20"/>
        <end position="77"/>
    </location>
</feature>
<evidence type="ECO:0000250" key="1"/>
<evidence type="ECO:0000255" key="2">
    <source>
        <dbReference type="PROSITE-ProRule" id="PRU00366"/>
    </source>
</evidence>
<evidence type="ECO:0000305" key="3"/>
<accession>Q3E703</accession>
<accession>C0SUV1</accession>
<reference key="1">
    <citation type="journal article" date="2000" name="Nature">
        <title>Sequence and analysis of chromosome 1 of the plant Arabidopsis thaliana.</title>
        <authorList>
            <person name="Theologis A."/>
            <person name="Ecker J.R."/>
            <person name="Palm C.J."/>
            <person name="Federspiel N.A."/>
            <person name="Kaul S."/>
            <person name="White O."/>
            <person name="Alonso J."/>
            <person name="Altafi H."/>
            <person name="Araujo R."/>
            <person name="Bowman C.L."/>
            <person name="Brooks S.Y."/>
            <person name="Buehler E."/>
            <person name="Chan A."/>
            <person name="Chao Q."/>
            <person name="Chen H."/>
            <person name="Cheuk R.F."/>
            <person name="Chin C.W."/>
            <person name="Chung M.K."/>
            <person name="Conn L."/>
            <person name="Conway A.B."/>
            <person name="Conway A.R."/>
            <person name="Creasy T.H."/>
            <person name="Dewar K."/>
            <person name="Dunn P."/>
            <person name="Etgu P."/>
            <person name="Feldblyum T.V."/>
            <person name="Feng J.-D."/>
            <person name="Fong B."/>
            <person name="Fujii C.Y."/>
            <person name="Gill J.E."/>
            <person name="Goldsmith A.D."/>
            <person name="Haas B."/>
            <person name="Hansen N.F."/>
            <person name="Hughes B."/>
            <person name="Huizar L."/>
            <person name="Hunter J.L."/>
            <person name="Jenkins J."/>
            <person name="Johnson-Hopson C."/>
            <person name="Khan S."/>
            <person name="Khaykin E."/>
            <person name="Kim C.J."/>
            <person name="Koo H.L."/>
            <person name="Kremenetskaia I."/>
            <person name="Kurtz D.B."/>
            <person name="Kwan A."/>
            <person name="Lam B."/>
            <person name="Langin-Hooper S."/>
            <person name="Lee A."/>
            <person name="Lee J.M."/>
            <person name="Lenz C.A."/>
            <person name="Li J.H."/>
            <person name="Li Y.-P."/>
            <person name="Lin X."/>
            <person name="Liu S.X."/>
            <person name="Liu Z.A."/>
            <person name="Luros J.S."/>
            <person name="Maiti R."/>
            <person name="Marziali A."/>
            <person name="Militscher J."/>
            <person name="Miranda M."/>
            <person name="Nguyen M."/>
            <person name="Nierman W.C."/>
            <person name="Osborne B.I."/>
            <person name="Pai G."/>
            <person name="Peterson J."/>
            <person name="Pham P.K."/>
            <person name="Rizzo M."/>
            <person name="Rooney T."/>
            <person name="Rowley D."/>
            <person name="Sakano H."/>
            <person name="Salzberg S.L."/>
            <person name="Schwartz J.R."/>
            <person name="Shinn P."/>
            <person name="Southwick A.M."/>
            <person name="Sun H."/>
            <person name="Tallon L.J."/>
            <person name="Tambunga G."/>
            <person name="Toriumi M.J."/>
            <person name="Town C.D."/>
            <person name="Utterback T."/>
            <person name="Van Aken S."/>
            <person name="Vaysberg M."/>
            <person name="Vysotskaia V.S."/>
            <person name="Walker M."/>
            <person name="Wu D."/>
            <person name="Yu G."/>
            <person name="Fraser C.M."/>
            <person name="Venter J.C."/>
            <person name="Davis R.W."/>
        </authorList>
    </citation>
    <scope>NUCLEOTIDE SEQUENCE [LARGE SCALE GENOMIC DNA]</scope>
    <source>
        <strain>cv. Columbia</strain>
    </source>
</reference>
<reference key="2">
    <citation type="journal article" date="2017" name="Plant J.">
        <title>Araport11: a complete reannotation of the Arabidopsis thaliana reference genome.</title>
        <authorList>
            <person name="Cheng C.Y."/>
            <person name="Krishnakumar V."/>
            <person name="Chan A.P."/>
            <person name="Thibaud-Nissen F."/>
            <person name="Schobel S."/>
            <person name="Town C.D."/>
        </authorList>
    </citation>
    <scope>GENOME REANNOTATION</scope>
    <source>
        <strain>cv. Columbia</strain>
    </source>
</reference>
<reference key="3">
    <citation type="submission" date="2009-03" db="EMBL/GenBank/DDBJ databases">
        <title>ORF cloning and analysis of Arabidopsis transcription factor genes.</title>
        <authorList>
            <person name="Fujita M."/>
            <person name="Mizukado S."/>
            <person name="Seki M."/>
            <person name="Shinozaki K."/>
            <person name="Mitsuda N."/>
            <person name="Takiguchi Y."/>
            <person name="Takagi M."/>
        </authorList>
    </citation>
    <scope>NUCLEOTIDE SEQUENCE [LARGE SCALE MRNA]</scope>
</reference>
<reference key="4">
    <citation type="journal article" date="2006" name="Plant Physiol.">
        <title>Genome-wide analysis of the ERF gene family in Arabidopsis and rice.</title>
        <authorList>
            <person name="Nakano T."/>
            <person name="Suzuki K."/>
            <person name="Fujimura T."/>
            <person name="Shinshi H."/>
        </authorList>
    </citation>
    <scope>GENE FAMILY</scope>
    <scope>NOMENCLATURE</scope>
</reference>
<protein>
    <recommendedName>
        <fullName>Ethylene-responsive transcription factor ERF088</fullName>
    </recommendedName>
</protein>